<reference key="1">
    <citation type="submission" date="2007-06" db="EMBL/GenBank/DDBJ databases">
        <title>Complete sequence of Methanococcus vannielii SB.</title>
        <authorList>
            <consortium name="US DOE Joint Genome Institute"/>
            <person name="Copeland A."/>
            <person name="Lucas S."/>
            <person name="Lapidus A."/>
            <person name="Barry K."/>
            <person name="Glavina del Rio T."/>
            <person name="Dalin E."/>
            <person name="Tice H."/>
            <person name="Pitluck S."/>
            <person name="Chain P."/>
            <person name="Malfatti S."/>
            <person name="Shin M."/>
            <person name="Vergez L."/>
            <person name="Schmutz J."/>
            <person name="Larimer F."/>
            <person name="Land M."/>
            <person name="Hauser L."/>
            <person name="Kyrpides N."/>
            <person name="Anderson I."/>
            <person name="Sieprawska-Lupa M."/>
            <person name="Whitman W.B."/>
            <person name="Richardson P."/>
        </authorList>
    </citation>
    <scope>NUCLEOTIDE SEQUENCE [LARGE SCALE GENOMIC DNA]</scope>
    <source>
        <strain>ATCC 35089 / DSM 1224 / JCM 13029 / OCM 148 / SB</strain>
    </source>
</reference>
<feature type="chain" id="PRO_1000051692" description="Large ribosomal subunit protein eL39">
    <location>
        <begin position="1"/>
        <end position="51"/>
    </location>
</feature>
<feature type="region of interest" description="Disordered" evidence="2">
    <location>
        <begin position="32"/>
        <end position="51"/>
    </location>
</feature>
<feature type="compositionally biased region" description="Basic residues" evidence="2">
    <location>
        <begin position="33"/>
        <end position="51"/>
    </location>
</feature>
<name>RL39_METVS</name>
<keyword id="KW-0687">Ribonucleoprotein</keyword>
<keyword id="KW-0689">Ribosomal protein</keyword>
<gene>
    <name evidence="1" type="primary">rpl39e</name>
    <name type="ordered locus">Mevan_1164</name>
</gene>
<comment type="similarity">
    <text evidence="1">Belongs to the eukaryotic ribosomal protein eL39 family.</text>
</comment>
<evidence type="ECO:0000255" key="1">
    <source>
        <dbReference type="HAMAP-Rule" id="MF_00629"/>
    </source>
</evidence>
<evidence type="ECO:0000256" key="2">
    <source>
        <dbReference type="SAM" id="MobiDB-lite"/>
    </source>
</evidence>
<evidence type="ECO:0000305" key="3"/>
<accession>A6URE0</accession>
<sequence>MAGNKPLGKKLRLAKALKQNRRVPMFAIARTKGSVKQHPKMRHWRRNTLKK</sequence>
<protein>
    <recommendedName>
        <fullName evidence="1">Large ribosomal subunit protein eL39</fullName>
    </recommendedName>
    <alternativeName>
        <fullName evidence="3">50S ribosomal protein L39e</fullName>
    </alternativeName>
</protein>
<dbReference type="EMBL" id="CP000742">
    <property type="protein sequence ID" value="ABR55062.1"/>
    <property type="molecule type" value="Genomic_DNA"/>
</dbReference>
<dbReference type="RefSeq" id="WP_012065977.1">
    <property type="nucleotide sequence ID" value="NC_009634.1"/>
</dbReference>
<dbReference type="SMR" id="A6URE0"/>
<dbReference type="STRING" id="406327.Mevan_1164"/>
<dbReference type="GeneID" id="5325605"/>
<dbReference type="KEGG" id="mvn:Mevan_1164"/>
<dbReference type="eggNOG" id="arCOG04177">
    <property type="taxonomic scope" value="Archaea"/>
</dbReference>
<dbReference type="HOGENOM" id="CLU_181948_4_0_2"/>
<dbReference type="OrthoDB" id="65887at2157"/>
<dbReference type="Proteomes" id="UP000001107">
    <property type="component" value="Chromosome"/>
</dbReference>
<dbReference type="GO" id="GO:1990904">
    <property type="term" value="C:ribonucleoprotein complex"/>
    <property type="evidence" value="ECO:0007669"/>
    <property type="project" value="UniProtKB-KW"/>
</dbReference>
<dbReference type="GO" id="GO:0005840">
    <property type="term" value="C:ribosome"/>
    <property type="evidence" value="ECO:0007669"/>
    <property type="project" value="UniProtKB-KW"/>
</dbReference>
<dbReference type="GO" id="GO:0003735">
    <property type="term" value="F:structural constituent of ribosome"/>
    <property type="evidence" value="ECO:0007669"/>
    <property type="project" value="InterPro"/>
</dbReference>
<dbReference type="GO" id="GO:0006412">
    <property type="term" value="P:translation"/>
    <property type="evidence" value="ECO:0007669"/>
    <property type="project" value="UniProtKB-UniRule"/>
</dbReference>
<dbReference type="FunFam" id="1.10.1620.10:FF:000001">
    <property type="entry name" value="60S ribosomal protein-like L39"/>
    <property type="match status" value="1"/>
</dbReference>
<dbReference type="Gene3D" id="1.10.1620.10">
    <property type="entry name" value="Ribosomal protein L39e"/>
    <property type="match status" value="1"/>
</dbReference>
<dbReference type="HAMAP" id="MF_00629">
    <property type="entry name" value="Ribosomal_eL39"/>
    <property type="match status" value="1"/>
</dbReference>
<dbReference type="InterPro" id="IPR000077">
    <property type="entry name" value="Ribosomal_eL39"/>
</dbReference>
<dbReference type="InterPro" id="IPR020083">
    <property type="entry name" value="Ribosomal_eL39_CS"/>
</dbReference>
<dbReference type="InterPro" id="IPR023626">
    <property type="entry name" value="Ribosomal_eL39_dom_sf"/>
</dbReference>
<dbReference type="NCBIfam" id="NF002316">
    <property type="entry name" value="PRK01242.1"/>
    <property type="match status" value="1"/>
</dbReference>
<dbReference type="Pfam" id="PF00832">
    <property type="entry name" value="Ribosomal_L39"/>
    <property type="match status" value="1"/>
</dbReference>
<dbReference type="SUPFAM" id="SSF48662">
    <property type="entry name" value="Ribosomal protein L39e"/>
    <property type="match status" value="1"/>
</dbReference>
<dbReference type="PROSITE" id="PS00051">
    <property type="entry name" value="RIBOSOMAL_L39E"/>
    <property type="match status" value="1"/>
</dbReference>
<organism>
    <name type="scientific">Methanococcus vannielii (strain ATCC 35089 / DSM 1224 / JCM 13029 / OCM 148 / SB)</name>
    <dbReference type="NCBI Taxonomy" id="406327"/>
    <lineage>
        <taxon>Archaea</taxon>
        <taxon>Methanobacteriati</taxon>
        <taxon>Methanobacteriota</taxon>
        <taxon>Methanomada group</taxon>
        <taxon>Methanococci</taxon>
        <taxon>Methanococcales</taxon>
        <taxon>Methanococcaceae</taxon>
        <taxon>Methanococcus</taxon>
    </lineage>
</organism>
<proteinExistence type="inferred from homology"/>